<gene>
    <name evidence="1" type="primary">der</name>
    <name type="synonym">engA</name>
    <name type="ordered locus">BG0520</name>
</gene>
<reference key="1">
    <citation type="journal article" date="2004" name="Nucleic Acids Res.">
        <title>Comparative analysis of the Borrelia garinii genome.</title>
        <authorList>
            <person name="Gloeckner G."/>
            <person name="Lehmann R."/>
            <person name="Romualdi A."/>
            <person name="Pradella S."/>
            <person name="Schulte-Spechtel U."/>
            <person name="Schilhabel M."/>
            <person name="Wilske B."/>
            <person name="Suehnel J."/>
            <person name="Platzer M."/>
        </authorList>
    </citation>
    <scope>NUCLEOTIDE SEQUENCE [LARGE SCALE GENOMIC DNA]</scope>
    <source>
        <strain>ATCC BAA-2496 / DSM 23469 / PBi</strain>
    </source>
</reference>
<dbReference type="EMBL" id="CP000013">
    <property type="protein sequence ID" value="AAU07359.1"/>
    <property type="molecule type" value="Genomic_DNA"/>
</dbReference>
<dbReference type="RefSeq" id="WP_011193821.1">
    <property type="nucleotide sequence ID" value="NC_006156.1"/>
</dbReference>
<dbReference type="SMR" id="Q661B2"/>
<dbReference type="GeneID" id="45161302"/>
<dbReference type="KEGG" id="bga:BG0520"/>
<dbReference type="eggNOG" id="COG1160">
    <property type="taxonomic scope" value="Bacteria"/>
</dbReference>
<dbReference type="HOGENOM" id="CLU_016077_6_2_12"/>
<dbReference type="OrthoDB" id="9805918at2"/>
<dbReference type="Proteomes" id="UP000002276">
    <property type="component" value="Chromosome"/>
</dbReference>
<dbReference type="GO" id="GO:0005525">
    <property type="term" value="F:GTP binding"/>
    <property type="evidence" value="ECO:0007669"/>
    <property type="project" value="UniProtKB-UniRule"/>
</dbReference>
<dbReference type="GO" id="GO:0042254">
    <property type="term" value="P:ribosome biogenesis"/>
    <property type="evidence" value="ECO:0007669"/>
    <property type="project" value="UniProtKB-KW"/>
</dbReference>
<dbReference type="CDD" id="cd01894">
    <property type="entry name" value="EngA1"/>
    <property type="match status" value="1"/>
</dbReference>
<dbReference type="CDD" id="cd01895">
    <property type="entry name" value="EngA2"/>
    <property type="match status" value="1"/>
</dbReference>
<dbReference type="Gene3D" id="3.30.300.20">
    <property type="match status" value="1"/>
</dbReference>
<dbReference type="Gene3D" id="3.40.50.300">
    <property type="entry name" value="P-loop containing nucleotide triphosphate hydrolases"/>
    <property type="match status" value="2"/>
</dbReference>
<dbReference type="HAMAP" id="MF_00195">
    <property type="entry name" value="GTPase_Der"/>
    <property type="match status" value="1"/>
</dbReference>
<dbReference type="InterPro" id="IPR031166">
    <property type="entry name" value="G_ENGA"/>
</dbReference>
<dbReference type="InterPro" id="IPR006073">
    <property type="entry name" value="GTP-bd"/>
</dbReference>
<dbReference type="InterPro" id="IPR016484">
    <property type="entry name" value="GTPase_Der"/>
</dbReference>
<dbReference type="InterPro" id="IPR032859">
    <property type="entry name" value="KH_dom-like"/>
</dbReference>
<dbReference type="InterPro" id="IPR015946">
    <property type="entry name" value="KH_dom-like_a/b"/>
</dbReference>
<dbReference type="InterPro" id="IPR027417">
    <property type="entry name" value="P-loop_NTPase"/>
</dbReference>
<dbReference type="InterPro" id="IPR005225">
    <property type="entry name" value="Small_GTP-bd"/>
</dbReference>
<dbReference type="NCBIfam" id="TIGR03594">
    <property type="entry name" value="GTPase_EngA"/>
    <property type="match status" value="1"/>
</dbReference>
<dbReference type="NCBIfam" id="TIGR00231">
    <property type="entry name" value="small_GTP"/>
    <property type="match status" value="2"/>
</dbReference>
<dbReference type="PANTHER" id="PTHR43834">
    <property type="entry name" value="GTPASE DER"/>
    <property type="match status" value="1"/>
</dbReference>
<dbReference type="PANTHER" id="PTHR43834:SF6">
    <property type="entry name" value="GTPASE DER"/>
    <property type="match status" value="1"/>
</dbReference>
<dbReference type="Pfam" id="PF14714">
    <property type="entry name" value="KH_dom-like"/>
    <property type="match status" value="1"/>
</dbReference>
<dbReference type="Pfam" id="PF01926">
    <property type="entry name" value="MMR_HSR1"/>
    <property type="match status" value="2"/>
</dbReference>
<dbReference type="PIRSF" id="PIRSF006485">
    <property type="entry name" value="GTP-binding_EngA"/>
    <property type="match status" value="1"/>
</dbReference>
<dbReference type="PRINTS" id="PR00326">
    <property type="entry name" value="GTP1OBG"/>
</dbReference>
<dbReference type="SUPFAM" id="SSF52540">
    <property type="entry name" value="P-loop containing nucleoside triphosphate hydrolases"/>
    <property type="match status" value="2"/>
</dbReference>
<dbReference type="PROSITE" id="PS51712">
    <property type="entry name" value="G_ENGA"/>
    <property type="match status" value="2"/>
</dbReference>
<keyword id="KW-0342">GTP-binding</keyword>
<keyword id="KW-0547">Nucleotide-binding</keyword>
<keyword id="KW-0677">Repeat</keyword>
<keyword id="KW-0690">Ribosome biogenesis</keyword>
<comment type="function">
    <text evidence="1">GTPase that plays an essential role in the late steps of ribosome biogenesis.</text>
</comment>
<comment type="subunit">
    <text evidence="1">Associates with the 50S ribosomal subunit.</text>
</comment>
<comment type="similarity">
    <text evidence="1">Belongs to the TRAFAC class TrmE-Era-EngA-EngB-Septin-like GTPase superfamily. EngA (Der) GTPase family.</text>
</comment>
<feature type="chain" id="PRO_1000011572" description="GTPase Der">
    <location>
        <begin position="1"/>
        <end position="433"/>
    </location>
</feature>
<feature type="domain" description="EngA-type G 1">
    <location>
        <begin position="5"/>
        <end position="167"/>
    </location>
</feature>
<feature type="domain" description="EngA-type G 2">
    <location>
        <begin position="174"/>
        <end position="349"/>
    </location>
</feature>
<feature type="domain" description="KH-like" evidence="1">
    <location>
        <begin position="349"/>
        <end position="429"/>
    </location>
</feature>
<feature type="binding site" evidence="1">
    <location>
        <begin position="11"/>
        <end position="18"/>
    </location>
    <ligand>
        <name>GTP</name>
        <dbReference type="ChEBI" id="CHEBI:37565"/>
        <label>1</label>
    </ligand>
</feature>
<feature type="binding site" evidence="1">
    <location>
        <begin position="58"/>
        <end position="62"/>
    </location>
    <ligand>
        <name>GTP</name>
        <dbReference type="ChEBI" id="CHEBI:37565"/>
        <label>1</label>
    </ligand>
</feature>
<feature type="binding site" evidence="1">
    <location>
        <begin position="119"/>
        <end position="122"/>
    </location>
    <ligand>
        <name>GTP</name>
        <dbReference type="ChEBI" id="CHEBI:37565"/>
        <label>1</label>
    </ligand>
</feature>
<feature type="binding site" evidence="1">
    <location>
        <begin position="180"/>
        <end position="187"/>
    </location>
    <ligand>
        <name>GTP</name>
        <dbReference type="ChEBI" id="CHEBI:37565"/>
        <label>2</label>
    </ligand>
</feature>
<feature type="binding site" evidence="1">
    <location>
        <begin position="227"/>
        <end position="231"/>
    </location>
    <ligand>
        <name>GTP</name>
        <dbReference type="ChEBI" id="CHEBI:37565"/>
        <label>2</label>
    </ligand>
</feature>
<feature type="binding site" evidence="1">
    <location>
        <begin position="292"/>
        <end position="295"/>
    </location>
    <ligand>
        <name>GTP</name>
        <dbReference type="ChEBI" id="CHEBI:37565"/>
        <label>2</label>
    </ligand>
</feature>
<protein>
    <recommendedName>
        <fullName evidence="1">GTPase Der</fullName>
    </recommendedName>
    <alternativeName>
        <fullName evidence="1">GTP-binding protein EngA</fullName>
    </alternativeName>
</protein>
<name>DER_BORGP</name>
<proteinExistence type="inferred from homology"/>
<organism>
    <name type="scientific">Borrelia garinii subsp. bavariensis (strain ATCC BAA-2496 / DSM 23469 / PBi)</name>
    <name type="common">Borreliella bavariensis</name>
    <dbReference type="NCBI Taxonomy" id="290434"/>
    <lineage>
        <taxon>Bacteria</taxon>
        <taxon>Pseudomonadati</taxon>
        <taxon>Spirochaetota</taxon>
        <taxon>Spirochaetia</taxon>
        <taxon>Spirochaetales</taxon>
        <taxon>Borreliaceae</taxon>
        <taxon>Borreliella</taxon>
    </lineage>
</organism>
<sequence>MLSYKKVLIVGRPNVGKSALFNRILDAKRSITESTYGVTRDLVEEVCKVGSFNFKLIDTGGFTILKDEISKIVVQKVLSSLEKVDLILLVLDVNEILLEDYEIIERLRKYSSKVILVLNKVDTKDKEFLAHKFHNLGFKRYFLVSALHRRGITKLRDFLKVEVGRVNIEEEVNIKVGIIGKPNSGKSTLINYLSGNEISIVSDQPGTTRDFIKTKLTRNGKVFEIIDTAGIRRRARVNEVVEYYSVNRALKVIDIVDIVFLLIDVEEELTSQDKKIAHYVTKKGKGIIIVFSKWDLLEESKGYFETLKGRVKFFFPVLNFAPIFRISVYKKIGLDSLFKEALKVKDQLELKTNTPDLNKMLNLWIKDYHLNISHKIKYITQVSTNPVKFILFANKIKNFPNSYYNYLVNNLRKIGYKNIPILVELREKIRDLK</sequence>
<evidence type="ECO:0000255" key="1">
    <source>
        <dbReference type="HAMAP-Rule" id="MF_00195"/>
    </source>
</evidence>
<accession>Q661B2</accession>